<feature type="chain" id="PRO_0000215620" description="Uncharacterized glycosyltransferase MK0977">
    <location>
        <begin position="1"/>
        <end position="344"/>
    </location>
</feature>
<accession>Q8TWQ5</accession>
<sequence length="344" mass="38220">MGLGRELRRIGLEPVFSSFGEGREMLMREFPDAPVYGLPKIELFSEDGSFDLLLLLRRHPDLPLRFYAGVEADRRVIRRHGCKVVVSDCQFHALVAAQIIGVPAIVISNMLRVPGEGSLVRLINGMLRRMFELADIVLIPDTYDDTYDVPEIDTEVVWVGPILKRRPDELPPRDAVRRKYGIPDDATVVLVTAGGSKYGRRIVRIAVEGLKLLSKSIDVFPVIISEERVGDGLGLQLRYVDNLLELIKVSNVVITHGGHTTLSECACLRTPVVSVPLPNHPEQHMNAERVLQRGLGVAVPPEELSPKRIAEAIEQAIDWKVPKIRMMDGRGAERAARIVAGTLD</sequence>
<comment type="similarity">
    <text evidence="1">Belongs to the glycosyltransferase 28 family.</text>
</comment>
<name>Y977_METKA</name>
<reference key="1">
    <citation type="journal article" date="2002" name="Proc. Natl. Acad. Sci. U.S.A.">
        <title>The complete genome of hyperthermophile Methanopyrus kandleri AV19 and monophyly of archaeal methanogens.</title>
        <authorList>
            <person name="Slesarev A.I."/>
            <person name="Mezhevaya K.V."/>
            <person name="Makarova K.S."/>
            <person name="Polushin N.N."/>
            <person name="Shcherbinina O.V."/>
            <person name="Shakhova V.V."/>
            <person name="Belova G.I."/>
            <person name="Aravind L."/>
            <person name="Natale D.A."/>
            <person name="Rogozin I.B."/>
            <person name="Tatusov R.L."/>
            <person name="Wolf Y.I."/>
            <person name="Stetter K.O."/>
            <person name="Malykh A.G."/>
            <person name="Koonin E.V."/>
            <person name="Kozyavkin S.A."/>
        </authorList>
    </citation>
    <scope>NUCLEOTIDE SEQUENCE [LARGE SCALE GENOMIC DNA]</scope>
    <source>
        <strain>AV19 / DSM 6324 / JCM 9639 / NBRC 100938</strain>
    </source>
</reference>
<organism>
    <name type="scientific">Methanopyrus kandleri (strain AV19 / DSM 6324 / JCM 9639 / NBRC 100938)</name>
    <dbReference type="NCBI Taxonomy" id="190192"/>
    <lineage>
        <taxon>Archaea</taxon>
        <taxon>Methanobacteriati</taxon>
        <taxon>Methanobacteriota</taxon>
        <taxon>Methanomada group</taxon>
        <taxon>Methanopyri</taxon>
        <taxon>Methanopyrales</taxon>
        <taxon>Methanopyraceae</taxon>
        <taxon>Methanopyrus</taxon>
    </lineage>
</organism>
<evidence type="ECO:0000305" key="1"/>
<proteinExistence type="inferred from homology"/>
<gene>
    <name type="ordered locus">MK0977</name>
</gene>
<dbReference type="EC" id="2.4.-.-"/>
<dbReference type="EMBL" id="AE009439">
    <property type="protein sequence ID" value="AAM02190.1"/>
    <property type="molecule type" value="Genomic_DNA"/>
</dbReference>
<dbReference type="RefSeq" id="WP_011019345.1">
    <property type="nucleotide sequence ID" value="NC_003551.1"/>
</dbReference>
<dbReference type="SMR" id="Q8TWQ5"/>
<dbReference type="STRING" id="190192.MK0977"/>
<dbReference type="CAZy" id="GT1">
    <property type="family name" value="Glycosyltransferase Family 1"/>
</dbReference>
<dbReference type="PaxDb" id="190192-MK0977"/>
<dbReference type="EnsemblBacteria" id="AAM02190">
    <property type="protein sequence ID" value="AAM02190"/>
    <property type="gene ID" value="MK0977"/>
</dbReference>
<dbReference type="GeneID" id="1477078"/>
<dbReference type="KEGG" id="mka:MK0977"/>
<dbReference type="HOGENOM" id="CLU_060247_0_0_2"/>
<dbReference type="InParanoid" id="Q8TWQ5"/>
<dbReference type="OrthoDB" id="46222at2157"/>
<dbReference type="Proteomes" id="UP000001826">
    <property type="component" value="Chromosome"/>
</dbReference>
<dbReference type="GO" id="GO:0016758">
    <property type="term" value="F:hexosyltransferase activity"/>
    <property type="evidence" value="ECO:0007669"/>
    <property type="project" value="InterPro"/>
</dbReference>
<dbReference type="CDD" id="cd03785">
    <property type="entry name" value="GT28_MurG"/>
    <property type="match status" value="1"/>
</dbReference>
<dbReference type="Gene3D" id="3.40.50.2000">
    <property type="entry name" value="Glycogen Phosphorylase B"/>
    <property type="match status" value="2"/>
</dbReference>
<dbReference type="InterPro" id="IPR007235">
    <property type="entry name" value="Glyco_trans_28_C"/>
</dbReference>
<dbReference type="PANTHER" id="PTHR21015:SF22">
    <property type="entry name" value="GLYCOSYLTRANSFERASE"/>
    <property type="match status" value="1"/>
</dbReference>
<dbReference type="PANTHER" id="PTHR21015">
    <property type="entry name" value="UDP-N-ACETYLGLUCOSAMINE--N-ACETYLMURAMYL-(PENTAPEPTIDE) PYROPHOSPHORYL-UNDECAPRENOL N-ACETYLGLUCOSAMINE TRANSFERASE 1"/>
    <property type="match status" value="1"/>
</dbReference>
<dbReference type="Pfam" id="PF04101">
    <property type="entry name" value="Glyco_tran_28_C"/>
    <property type="match status" value="1"/>
</dbReference>
<dbReference type="SUPFAM" id="SSF53756">
    <property type="entry name" value="UDP-Glycosyltransferase/glycogen phosphorylase"/>
    <property type="match status" value="1"/>
</dbReference>
<protein>
    <recommendedName>
        <fullName>Uncharacterized glycosyltransferase MK0977</fullName>
        <ecNumber>2.4.-.-</ecNumber>
    </recommendedName>
</protein>
<keyword id="KW-0328">Glycosyltransferase</keyword>
<keyword id="KW-1185">Reference proteome</keyword>
<keyword id="KW-0808">Transferase</keyword>